<sequence>MRGFYIGRYQPFHNGHRHMVEEIAAEVDELVLGIGSAGDSHTTRNPFTAGERVMMVTKAVEKLDVTTYVVPIEDLDRNSVWVSHVQSMTPRFDIAYSNNPLVVRLFEEAGVEARGSPMFRRDVLEGAELRERMIHGRDWQALVPETVVDVIEEIDGVERIRRIAETDANGTAPSDA</sequence>
<organism>
    <name type="scientific">Halorubrum lacusprofundi (strain ATCC 49239 / DSM 5036 / JCM 8891 / ACAM 34)</name>
    <dbReference type="NCBI Taxonomy" id="416348"/>
    <lineage>
        <taxon>Archaea</taxon>
        <taxon>Methanobacteriati</taxon>
        <taxon>Methanobacteriota</taxon>
        <taxon>Stenosarchaea group</taxon>
        <taxon>Halobacteria</taxon>
        <taxon>Halobacteriales</taxon>
        <taxon>Haloferacaceae</taxon>
        <taxon>Halorubrum</taxon>
    </lineage>
</organism>
<keyword id="KW-0067">ATP-binding</keyword>
<keyword id="KW-0963">Cytoplasm</keyword>
<keyword id="KW-0520">NAD</keyword>
<keyword id="KW-0547">Nucleotide-binding</keyword>
<keyword id="KW-0548">Nucleotidyltransferase</keyword>
<keyword id="KW-0662">Pyridine nucleotide biosynthesis</keyword>
<keyword id="KW-1185">Reference proteome</keyword>
<keyword id="KW-0808">Transferase</keyword>
<name>NADM_HALLT</name>
<accession>B9LMP6</accession>
<proteinExistence type="inferred from homology"/>
<comment type="catalytic activity">
    <reaction evidence="1">
        <text>beta-nicotinamide D-ribonucleotide + ATP + H(+) = diphosphate + NAD(+)</text>
        <dbReference type="Rhea" id="RHEA:21360"/>
        <dbReference type="ChEBI" id="CHEBI:14649"/>
        <dbReference type="ChEBI" id="CHEBI:15378"/>
        <dbReference type="ChEBI" id="CHEBI:30616"/>
        <dbReference type="ChEBI" id="CHEBI:33019"/>
        <dbReference type="ChEBI" id="CHEBI:57540"/>
        <dbReference type="EC" id="2.7.7.1"/>
    </reaction>
</comment>
<comment type="pathway">
    <text evidence="1">Cofactor biosynthesis; NAD(+) biosynthesis; NAD(+) from nicotinamide D-ribonucleotide: step 1/1.</text>
</comment>
<comment type="subcellular location">
    <subcellularLocation>
        <location evidence="1">Cytoplasm</location>
    </subcellularLocation>
</comment>
<comment type="similarity">
    <text evidence="1">Belongs to the archaeal NMN adenylyltransferase family.</text>
</comment>
<dbReference type="EC" id="2.7.7.1" evidence="1"/>
<dbReference type="EMBL" id="CP001365">
    <property type="protein sequence ID" value="ACM56634.1"/>
    <property type="molecule type" value="Genomic_DNA"/>
</dbReference>
<dbReference type="RefSeq" id="WP_015909781.1">
    <property type="nucleotide sequence ID" value="NC_012029.1"/>
</dbReference>
<dbReference type="SMR" id="B9LMP6"/>
<dbReference type="GeneID" id="7400108"/>
<dbReference type="KEGG" id="hla:Hlac_1037"/>
<dbReference type="eggNOG" id="arCOG00972">
    <property type="taxonomic scope" value="Archaea"/>
</dbReference>
<dbReference type="HOGENOM" id="CLU_108783_0_0_2"/>
<dbReference type="UniPathway" id="UPA00253">
    <property type="reaction ID" value="UER00600"/>
</dbReference>
<dbReference type="Proteomes" id="UP000000740">
    <property type="component" value="Chromosome 1"/>
</dbReference>
<dbReference type="GO" id="GO:0005737">
    <property type="term" value="C:cytoplasm"/>
    <property type="evidence" value="ECO:0007669"/>
    <property type="project" value="UniProtKB-SubCell"/>
</dbReference>
<dbReference type="GO" id="GO:0005524">
    <property type="term" value="F:ATP binding"/>
    <property type="evidence" value="ECO:0007669"/>
    <property type="project" value="UniProtKB-KW"/>
</dbReference>
<dbReference type="GO" id="GO:0000309">
    <property type="term" value="F:nicotinamide-nucleotide adenylyltransferase activity"/>
    <property type="evidence" value="ECO:0007669"/>
    <property type="project" value="UniProtKB-UniRule"/>
</dbReference>
<dbReference type="GO" id="GO:0009435">
    <property type="term" value="P:NAD biosynthetic process"/>
    <property type="evidence" value="ECO:0007669"/>
    <property type="project" value="UniProtKB-UniRule"/>
</dbReference>
<dbReference type="Gene3D" id="3.40.50.620">
    <property type="entry name" value="HUPs"/>
    <property type="match status" value="1"/>
</dbReference>
<dbReference type="HAMAP" id="MF_00243">
    <property type="entry name" value="NMN_adenylyltr"/>
    <property type="match status" value="1"/>
</dbReference>
<dbReference type="InterPro" id="IPR004821">
    <property type="entry name" value="Cyt_trans-like"/>
</dbReference>
<dbReference type="InterPro" id="IPR006418">
    <property type="entry name" value="NMN_Atrans_arc"/>
</dbReference>
<dbReference type="InterPro" id="IPR014729">
    <property type="entry name" value="Rossmann-like_a/b/a_fold"/>
</dbReference>
<dbReference type="NCBIfam" id="TIGR01527">
    <property type="entry name" value="arch_NMN_Atrans"/>
    <property type="match status" value="1"/>
</dbReference>
<dbReference type="NCBIfam" id="TIGR00125">
    <property type="entry name" value="cyt_tran_rel"/>
    <property type="match status" value="1"/>
</dbReference>
<dbReference type="NCBIfam" id="NF002243">
    <property type="entry name" value="PRK01153.1"/>
    <property type="match status" value="1"/>
</dbReference>
<dbReference type="PANTHER" id="PTHR21342:SF0">
    <property type="entry name" value="BIFUNCTIONAL NMN ADENYLYLTRANSFERASE_NUDIX HYDROLASE"/>
    <property type="match status" value="1"/>
</dbReference>
<dbReference type="PANTHER" id="PTHR21342">
    <property type="entry name" value="PHOSPHOPANTETHEINE ADENYLYLTRANSFERASE"/>
    <property type="match status" value="1"/>
</dbReference>
<dbReference type="Pfam" id="PF01467">
    <property type="entry name" value="CTP_transf_like"/>
    <property type="match status" value="1"/>
</dbReference>
<dbReference type="SUPFAM" id="SSF52374">
    <property type="entry name" value="Nucleotidylyl transferase"/>
    <property type="match status" value="1"/>
</dbReference>
<evidence type="ECO:0000255" key="1">
    <source>
        <dbReference type="HAMAP-Rule" id="MF_00243"/>
    </source>
</evidence>
<gene>
    <name type="ordered locus">Hlac_1037</name>
</gene>
<feature type="chain" id="PRO_1000125330" description="Nicotinamide-nucleotide adenylyltransferase">
    <location>
        <begin position="1"/>
        <end position="176"/>
    </location>
</feature>
<protein>
    <recommendedName>
        <fullName evidence="1">Nicotinamide-nucleotide adenylyltransferase</fullName>
        <ecNumber evidence="1">2.7.7.1</ecNumber>
    </recommendedName>
    <alternativeName>
        <fullName evidence="1">NAD(+) diphosphorylase</fullName>
    </alternativeName>
    <alternativeName>
        <fullName evidence="1">NAD(+) pyrophosphorylase</fullName>
    </alternativeName>
    <alternativeName>
        <fullName evidence="1">NMN adenylyltransferase</fullName>
    </alternativeName>
</protein>
<reference key="1">
    <citation type="journal article" date="2016" name="Stand. Genomic Sci.">
        <title>Complete genome sequence of the Antarctic Halorubrum lacusprofundi type strain ACAM 34.</title>
        <authorList>
            <person name="Anderson I.J."/>
            <person name="DasSarma P."/>
            <person name="Lucas S."/>
            <person name="Copeland A."/>
            <person name="Lapidus A."/>
            <person name="Del Rio T.G."/>
            <person name="Tice H."/>
            <person name="Dalin E."/>
            <person name="Bruce D.C."/>
            <person name="Goodwin L."/>
            <person name="Pitluck S."/>
            <person name="Sims D."/>
            <person name="Brettin T.S."/>
            <person name="Detter J.C."/>
            <person name="Han C.S."/>
            <person name="Larimer F."/>
            <person name="Hauser L."/>
            <person name="Land M."/>
            <person name="Ivanova N."/>
            <person name="Richardson P."/>
            <person name="Cavicchioli R."/>
            <person name="DasSarma S."/>
            <person name="Woese C.R."/>
            <person name="Kyrpides N.C."/>
        </authorList>
    </citation>
    <scope>NUCLEOTIDE SEQUENCE [LARGE SCALE GENOMIC DNA]</scope>
    <source>
        <strain>ATCC 49239 / DSM 5036 / JCM 8891 / ACAM 34</strain>
    </source>
</reference>